<comment type="function">
    <text evidence="1">Component of a cullin-RING-based BCR (BTB-CUL3-RBX1) E3 ubiquitin-protein ligase complex that mediates the ubiquitination of target proteins, leading most often to their proteasomal degradation.</text>
</comment>
<comment type="pathway">
    <text>Protein modification; protein ubiquitination.</text>
</comment>
<comment type="subunit">
    <text evidence="1">Homodimer. Part of cullin-RING-based BCR (BTB-CUL3-RBX1) E3 ubiquitin-protein ligase complexes that contain CUL3 and SPOP, plus a target protein (By similarity).</text>
</comment>
<comment type="subcellular location">
    <subcellularLocation>
        <location evidence="1">Nucleus</location>
    </subcellularLocation>
    <subcellularLocation>
        <location evidence="1">Nucleus speckle</location>
    </subcellularLocation>
</comment>
<comment type="domain">
    <text evidence="1">The BTB (POZ) domain mediates dimerization and interaction with CUL3.</text>
</comment>
<comment type="domain">
    <text evidence="1">The MATH domain mediates interaction with protein-ubiquitin ligase substrates.</text>
</comment>
<comment type="similarity">
    <text evidence="4">Belongs to the Tdpoz family.</text>
</comment>
<evidence type="ECO:0000250" key="1"/>
<evidence type="ECO:0000255" key="2">
    <source>
        <dbReference type="PROSITE-ProRule" id="PRU00037"/>
    </source>
</evidence>
<evidence type="ECO:0000255" key="3">
    <source>
        <dbReference type="PROSITE-ProRule" id="PRU00129"/>
    </source>
</evidence>
<evidence type="ECO:0000305" key="4"/>
<feature type="chain" id="PRO_0000274585" description="Speckle-type POZ protein A">
    <location>
        <begin position="1"/>
        <end position="374"/>
    </location>
</feature>
<feature type="domain" description="MATH" evidence="3">
    <location>
        <begin position="31"/>
        <end position="161"/>
    </location>
</feature>
<feature type="domain" description="BTB" evidence="2">
    <location>
        <begin position="173"/>
        <end position="297"/>
    </location>
</feature>
<feature type="region of interest" description="Required for nuclear localization" evidence="1">
    <location>
        <begin position="71"/>
        <end position="191"/>
    </location>
</feature>
<feature type="region of interest" description="Homodimerization" evidence="1">
    <location>
        <begin position="297"/>
        <end position="355"/>
    </location>
</feature>
<reference key="1">
    <citation type="submission" date="2003-01" db="EMBL/GenBank/DDBJ databases">
        <authorList>
            <consortium name="NIH - Xenopus Gene Collection (XGC) project"/>
        </authorList>
    </citation>
    <scope>NUCLEOTIDE SEQUENCE [LARGE SCALE MRNA]</scope>
    <source>
        <tissue>Embryo</tissue>
    </source>
</reference>
<accession>Q7ZX06</accession>
<name>SPOPA_XENLA</name>
<dbReference type="EMBL" id="BC046272">
    <property type="protein sequence ID" value="AAH46272.1"/>
    <property type="molecule type" value="mRNA"/>
</dbReference>
<dbReference type="RefSeq" id="NP_001080176.1">
    <property type="nucleotide sequence ID" value="NM_001086707.1"/>
</dbReference>
<dbReference type="SMR" id="Q7ZX06"/>
<dbReference type="DNASU" id="379868"/>
<dbReference type="GeneID" id="379868"/>
<dbReference type="KEGG" id="xla:379868"/>
<dbReference type="AGR" id="Xenbase:XB-GENE-6254679"/>
<dbReference type="CTD" id="379868"/>
<dbReference type="Xenbase" id="XB-GENE-6254679">
    <property type="gene designation" value="spop.L"/>
</dbReference>
<dbReference type="OMA" id="IKFNYMW"/>
<dbReference type="OrthoDB" id="6359816at2759"/>
<dbReference type="UniPathway" id="UPA00143"/>
<dbReference type="Proteomes" id="UP000186698">
    <property type="component" value="Chromosome 9_10L"/>
</dbReference>
<dbReference type="Bgee" id="379868">
    <property type="expression patterns" value="Expressed in muscle tissue and 19 other cell types or tissues"/>
</dbReference>
<dbReference type="GO" id="GO:0031463">
    <property type="term" value="C:Cul3-RING ubiquitin ligase complex"/>
    <property type="evidence" value="ECO:0000250"/>
    <property type="project" value="UniProtKB"/>
</dbReference>
<dbReference type="GO" id="GO:0005737">
    <property type="term" value="C:cytoplasm"/>
    <property type="evidence" value="ECO:0000318"/>
    <property type="project" value="GO_Central"/>
</dbReference>
<dbReference type="GO" id="GO:0016607">
    <property type="term" value="C:nuclear speck"/>
    <property type="evidence" value="ECO:0007669"/>
    <property type="project" value="UniProtKB-SubCell"/>
</dbReference>
<dbReference type="GO" id="GO:0005634">
    <property type="term" value="C:nucleus"/>
    <property type="evidence" value="ECO:0000250"/>
    <property type="project" value="UniProtKB"/>
</dbReference>
<dbReference type="GO" id="GO:0031625">
    <property type="term" value="F:ubiquitin protein ligase binding"/>
    <property type="evidence" value="ECO:0000318"/>
    <property type="project" value="GO_Central"/>
</dbReference>
<dbReference type="GO" id="GO:0043161">
    <property type="term" value="P:proteasome-mediated ubiquitin-dependent protein catabolic process"/>
    <property type="evidence" value="ECO:0000250"/>
    <property type="project" value="UniProtKB"/>
</dbReference>
<dbReference type="GO" id="GO:0016567">
    <property type="term" value="P:protein ubiquitination"/>
    <property type="evidence" value="ECO:0007669"/>
    <property type="project" value="UniProtKB-UniPathway"/>
</dbReference>
<dbReference type="GO" id="GO:0030162">
    <property type="term" value="P:regulation of proteolysis"/>
    <property type="evidence" value="ECO:0000318"/>
    <property type="project" value="GO_Central"/>
</dbReference>
<dbReference type="CDD" id="cd18518">
    <property type="entry name" value="BACK_SPOP"/>
    <property type="match status" value="1"/>
</dbReference>
<dbReference type="CDD" id="cd18279">
    <property type="entry name" value="BTB_POZ_SPOP-like"/>
    <property type="match status" value="1"/>
</dbReference>
<dbReference type="CDD" id="cd03774">
    <property type="entry name" value="MATH_SPOP"/>
    <property type="match status" value="1"/>
</dbReference>
<dbReference type="FunFam" id="2.60.210.10:FF:000028">
    <property type="entry name" value="Speckle-type POZ protein-like"/>
    <property type="match status" value="1"/>
</dbReference>
<dbReference type="FunFam" id="3.30.710.10:FF:000008">
    <property type="entry name" value="Speckle-type POZ protein-like a"/>
    <property type="match status" value="1"/>
</dbReference>
<dbReference type="Gene3D" id="6.10.250.3030">
    <property type="match status" value="1"/>
</dbReference>
<dbReference type="Gene3D" id="6.20.250.50">
    <property type="match status" value="1"/>
</dbReference>
<dbReference type="Gene3D" id="2.60.210.10">
    <property type="entry name" value="Apoptosis, Tumor Necrosis Factor Receptor Associated Protein 2, Chain A"/>
    <property type="match status" value="1"/>
</dbReference>
<dbReference type="Gene3D" id="3.30.710.10">
    <property type="entry name" value="Potassium Channel Kv1.1, Chain A"/>
    <property type="match status" value="1"/>
</dbReference>
<dbReference type="InterPro" id="IPR056423">
    <property type="entry name" value="BACK_BPM_SPOP"/>
</dbReference>
<dbReference type="InterPro" id="IPR000210">
    <property type="entry name" value="BTB/POZ_dom"/>
</dbReference>
<dbReference type="InterPro" id="IPR002083">
    <property type="entry name" value="MATH/TRAF_dom"/>
</dbReference>
<dbReference type="InterPro" id="IPR011333">
    <property type="entry name" value="SKP1/BTB/POZ_sf"/>
</dbReference>
<dbReference type="InterPro" id="IPR034089">
    <property type="entry name" value="SPOP_C"/>
</dbReference>
<dbReference type="InterPro" id="IPR008974">
    <property type="entry name" value="TRAF-like"/>
</dbReference>
<dbReference type="PANTHER" id="PTHR24413">
    <property type="entry name" value="SPECKLE-TYPE POZ PROTEIN"/>
    <property type="match status" value="1"/>
</dbReference>
<dbReference type="Pfam" id="PF24570">
    <property type="entry name" value="BACK_BPM_SPOP"/>
    <property type="match status" value="1"/>
</dbReference>
<dbReference type="Pfam" id="PF00651">
    <property type="entry name" value="BTB"/>
    <property type="match status" value="1"/>
</dbReference>
<dbReference type="Pfam" id="PF22486">
    <property type="entry name" value="MATH_2"/>
    <property type="match status" value="1"/>
</dbReference>
<dbReference type="SMART" id="SM00225">
    <property type="entry name" value="BTB"/>
    <property type="match status" value="1"/>
</dbReference>
<dbReference type="SMART" id="SM00061">
    <property type="entry name" value="MATH"/>
    <property type="match status" value="1"/>
</dbReference>
<dbReference type="SUPFAM" id="SSF54695">
    <property type="entry name" value="POZ domain"/>
    <property type="match status" value="1"/>
</dbReference>
<dbReference type="SUPFAM" id="SSF49599">
    <property type="entry name" value="TRAF domain-like"/>
    <property type="match status" value="1"/>
</dbReference>
<dbReference type="PROSITE" id="PS50097">
    <property type="entry name" value="BTB"/>
    <property type="match status" value="1"/>
</dbReference>
<dbReference type="PROSITE" id="PS50144">
    <property type="entry name" value="MATH"/>
    <property type="match status" value="1"/>
</dbReference>
<organism>
    <name type="scientific">Xenopus laevis</name>
    <name type="common">African clawed frog</name>
    <dbReference type="NCBI Taxonomy" id="8355"/>
    <lineage>
        <taxon>Eukaryota</taxon>
        <taxon>Metazoa</taxon>
        <taxon>Chordata</taxon>
        <taxon>Craniata</taxon>
        <taxon>Vertebrata</taxon>
        <taxon>Euteleostomi</taxon>
        <taxon>Amphibia</taxon>
        <taxon>Batrachia</taxon>
        <taxon>Anura</taxon>
        <taxon>Pipoidea</taxon>
        <taxon>Pipidae</taxon>
        <taxon>Xenopodinae</taxon>
        <taxon>Xenopus</taxon>
        <taxon>Xenopus</taxon>
    </lineage>
</organism>
<keyword id="KW-0539">Nucleus</keyword>
<keyword id="KW-1185">Reference proteome</keyword>
<keyword id="KW-0833">Ubl conjugation pathway</keyword>
<sequence>MSRVPSPPPPAEMSSGPVAESWCYTQIKVVKFSYMWTINNFSFCREEMGEVIKSSTFSSGANDKLKWCLRVNPKGLDEESKDYLSLYLLLVSCPKSEVRAKFKFSILNAKGEETKAMESQRAYRFVQGKDWGFKKFIRRDFLLDEANGLLPDDKLTLFCEVSVVQDSVNISGQNTMNMVKVPECRLADELGGLWENSRFTDCCLCVAGQEFQAHKAILAARSPVFSAMFEHEMEESKKNRVEIKDVEPDVFKEMMCFIYTGKASNLDKMADDLLAAADKYALERLKVMCEEALCSNLSVENAAEILILADLHSADQLKTQAVDFINYHASDVMETSGWKSMVVSHPHLVAEAYRSLASAQCPFLGPPRKRLKQS</sequence>
<proteinExistence type="evidence at transcript level"/>
<gene>
    <name type="primary">spop-a</name>
</gene>
<protein>
    <recommendedName>
        <fullName>Speckle-type POZ protein A</fullName>
    </recommendedName>
</protein>